<feature type="initiator methionine" description="Removed" evidence="8">
    <location>
        <position position="1"/>
    </location>
</feature>
<feature type="chain" id="PRO_0000185560" description="Biotin synthase">
    <location>
        <begin position="2"/>
        <end position="349"/>
    </location>
</feature>
<feature type="domain" description="Radical SAM core" evidence="2">
    <location>
        <begin position="70"/>
        <end position="295"/>
    </location>
</feature>
<feature type="binding site" evidence="1">
    <location>
        <position position="85"/>
    </location>
    <ligand>
        <name>[4Fe-4S] cluster</name>
        <dbReference type="ChEBI" id="CHEBI:49883"/>
        <note>4Fe-4S-S-AdoMet</note>
    </ligand>
</feature>
<feature type="binding site" evidence="1">
    <location>
        <position position="89"/>
    </location>
    <ligand>
        <name>[4Fe-4S] cluster</name>
        <dbReference type="ChEBI" id="CHEBI:49883"/>
        <note>4Fe-4S-S-AdoMet</note>
    </ligand>
</feature>
<feature type="binding site" evidence="1">
    <location>
        <position position="92"/>
    </location>
    <ligand>
        <name>[4Fe-4S] cluster</name>
        <dbReference type="ChEBI" id="CHEBI:49883"/>
        <note>4Fe-4S-S-AdoMet</note>
    </ligand>
</feature>
<feature type="binding site" evidence="1">
    <location>
        <position position="128"/>
    </location>
    <ligand>
        <name>[2Fe-2S] cluster</name>
        <dbReference type="ChEBI" id="CHEBI:190135"/>
    </ligand>
</feature>
<feature type="binding site" evidence="1">
    <location>
        <position position="161"/>
    </location>
    <ligand>
        <name>[2Fe-2S] cluster</name>
        <dbReference type="ChEBI" id="CHEBI:190135"/>
    </ligand>
</feature>
<feature type="binding site" evidence="1">
    <location>
        <position position="220"/>
    </location>
    <ligand>
        <name>[2Fe-2S] cluster</name>
        <dbReference type="ChEBI" id="CHEBI:190135"/>
    </ligand>
</feature>
<feature type="binding site" evidence="1">
    <location>
        <position position="290"/>
    </location>
    <ligand>
        <name>[2Fe-2S] cluster</name>
        <dbReference type="ChEBI" id="CHEBI:190135"/>
    </ligand>
</feature>
<feature type="modified residue" description="N-acetylthreonine" evidence="8">
    <location>
        <position position="2"/>
    </location>
</feature>
<reference key="1">
    <citation type="journal article" date="1998" name="Nature">
        <title>Deciphering the biology of Mycobacterium tuberculosis from the complete genome sequence.</title>
        <authorList>
            <person name="Cole S.T."/>
            <person name="Brosch R."/>
            <person name="Parkhill J."/>
            <person name="Garnier T."/>
            <person name="Churcher C.M."/>
            <person name="Harris D.E."/>
            <person name="Gordon S.V."/>
            <person name="Eiglmeier K."/>
            <person name="Gas S."/>
            <person name="Barry C.E. III"/>
            <person name="Tekaia F."/>
            <person name="Badcock K."/>
            <person name="Basham D."/>
            <person name="Brown D."/>
            <person name="Chillingworth T."/>
            <person name="Connor R."/>
            <person name="Davies R.M."/>
            <person name="Devlin K."/>
            <person name="Feltwell T."/>
            <person name="Gentles S."/>
            <person name="Hamlin N."/>
            <person name="Holroyd S."/>
            <person name="Hornsby T."/>
            <person name="Jagels K."/>
            <person name="Krogh A."/>
            <person name="McLean J."/>
            <person name="Moule S."/>
            <person name="Murphy L.D."/>
            <person name="Oliver S."/>
            <person name="Osborne J."/>
            <person name="Quail M.A."/>
            <person name="Rajandream M.A."/>
            <person name="Rogers J."/>
            <person name="Rutter S."/>
            <person name="Seeger K."/>
            <person name="Skelton S."/>
            <person name="Squares S."/>
            <person name="Squares R."/>
            <person name="Sulston J.E."/>
            <person name="Taylor K."/>
            <person name="Whitehead S."/>
            <person name="Barrell B.G."/>
        </authorList>
    </citation>
    <scope>NUCLEOTIDE SEQUENCE [LARGE SCALE GENOMIC DNA]</scope>
    <source>
        <strain>ATCC 25618 / H37Rv</strain>
    </source>
</reference>
<reference key="2">
    <citation type="journal article" date="2003" name="Proc. Natl. Acad. Sci. U.S.A.">
        <title>Genetic requirements for mycobacterial survival during infection.</title>
        <authorList>
            <person name="Sassetti C.M."/>
            <person name="Rubin E.J."/>
        </authorList>
    </citation>
    <scope>DISRUPTION PHENOTYPE</scope>
    <source>
        <strain>ATCC 25618 / H37Rv</strain>
    </source>
</reference>
<reference key="3">
    <citation type="journal article" date="2008" name="BMC Syst. Biol.">
        <title>targetTB: a target identification pipeline for Mycobacterium tuberculosis through an interactome, reactome and genome-scale structural analysis.</title>
        <authorList>
            <person name="Raman K."/>
            <person name="Yeturu K."/>
            <person name="Chandra N."/>
        </authorList>
    </citation>
    <scope>IDENTIFICATION AS A DRUG TARGET [LARGE SCALE ANALYSIS]</scope>
</reference>
<reference key="4">
    <citation type="journal article" date="2011" name="Mol. Cell. Proteomics">
        <title>Proteogenomic analysis of Mycobacterium tuberculosis by high resolution mass spectrometry.</title>
        <authorList>
            <person name="Kelkar D.S."/>
            <person name="Kumar D."/>
            <person name="Kumar P."/>
            <person name="Balakrishnan L."/>
            <person name="Muthusamy B."/>
            <person name="Yadav A.K."/>
            <person name="Shrivastava P."/>
            <person name="Marimuthu A."/>
            <person name="Anand S."/>
            <person name="Sundaram H."/>
            <person name="Kingsbury R."/>
            <person name="Harsha H.C."/>
            <person name="Nair B."/>
            <person name="Prasad T.S."/>
            <person name="Chauhan D.S."/>
            <person name="Katoch K."/>
            <person name="Katoch V.M."/>
            <person name="Kumar P."/>
            <person name="Chaerkady R."/>
            <person name="Ramachandran S."/>
            <person name="Dash D."/>
            <person name="Pandey A."/>
        </authorList>
    </citation>
    <scope>ACETYLATION [LARGE SCALE ANALYSIS] AT THR-2</scope>
    <scope>CLEAVAGE OF INITIATOR METHIONINE [LARGE SCALE ANALYSIS]</scope>
    <scope>IDENTIFICATION BY MASS SPECTROMETRY [LARGE SCALE ANALYSIS]</scope>
    <source>
        <strain>ATCC 25618 / H37Rv</strain>
    </source>
</reference>
<reference key="5">
    <citation type="journal article" date="2016" name="Tuberculosis">
        <title>Cloning, expression and characterization of histidine-tagged biotin synthase of Mycobacterium tuberculosis.</title>
        <authorList>
            <person name="Magwamba C.C."/>
            <person name="Rukseree K."/>
            <person name="Palittapongarnpim P."/>
        </authorList>
    </citation>
    <scope>FUNCTION</scope>
    <scope>CATALYTIC ACTIVITY</scope>
    <scope>ACTIVITY REGULATION</scope>
    <scope>BIOPHYSICOCHEMICAL PROPERTIES</scope>
    <scope>SUBUNIT</scope>
    <source>
        <strain>H37Rv</strain>
    </source>
</reference>
<reference key="6">
    <citation type="journal article" date="2024" name="Nat. Commun.">
        <title>Mycobacterial biotin synthases require an auxiliary protein to convert dethiobiotin into biotin.</title>
        <authorList>
            <person name="Qu D."/>
            <person name="Ge P."/>
            <person name="Botella L."/>
            <person name="Park S.W."/>
            <person name="Lee H.N."/>
            <person name="Thornton N."/>
            <person name="Bean J.M."/>
            <person name="Krieger I.V."/>
            <person name="Sacchettini J.C."/>
            <person name="Ehrt S."/>
            <person name="Aldrich C.C."/>
            <person name="Schnappinger D."/>
        </authorList>
    </citation>
    <scope>FUNCTION</scope>
    <scope>CATALYTIC ACTIVITY</scope>
    <scope>ACTIVITY REGULATION</scope>
    <scope>BIOPHYSICOCHEMICAL PROPERTIES</scope>
    <scope>DISRUPTION PHENOTYPE</scope>
    <source>
        <strain>H37Rv</strain>
    </source>
</reference>
<accession>P9WPQ7</accession>
<accession>L0TA21</accession>
<accession>O06601</accession>
<accession>P0A506</accession>
<evidence type="ECO:0000255" key="1">
    <source>
        <dbReference type="HAMAP-Rule" id="MF_01694"/>
    </source>
</evidence>
<evidence type="ECO:0000255" key="2">
    <source>
        <dbReference type="PROSITE-ProRule" id="PRU01266"/>
    </source>
</evidence>
<evidence type="ECO:0000269" key="3">
    <source>
    </source>
</evidence>
<evidence type="ECO:0000269" key="4">
    <source>
    </source>
</evidence>
<evidence type="ECO:0000269" key="5">
    <source>
    </source>
</evidence>
<evidence type="ECO:0000269" key="6">
    <source>
    </source>
</evidence>
<evidence type="ECO:0000303" key="7">
    <source>
    </source>
</evidence>
<evidence type="ECO:0007744" key="8">
    <source>
    </source>
</evidence>
<name>BIOB_MYCTU</name>
<keyword id="KW-0001">2Fe-2S</keyword>
<keyword id="KW-0004">4Fe-4S</keyword>
<keyword id="KW-0007">Acetylation</keyword>
<keyword id="KW-0093">Biotin biosynthesis</keyword>
<keyword id="KW-0408">Iron</keyword>
<keyword id="KW-0411">Iron-sulfur</keyword>
<keyword id="KW-0479">Metal-binding</keyword>
<keyword id="KW-1185">Reference proteome</keyword>
<keyword id="KW-0949">S-adenosyl-L-methionine</keyword>
<keyword id="KW-0808">Transferase</keyword>
<protein>
    <recommendedName>
        <fullName evidence="1 7">Biotin synthase</fullName>
        <ecNumber evidence="1 5 6">2.8.1.6</ecNumber>
    </recommendedName>
</protein>
<gene>
    <name evidence="1 7" type="primary">bioB</name>
    <name type="ordered locus">Rv1589</name>
    <name type="ORF">MTCY336.15c</name>
</gene>
<comment type="function">
    <text evidence="1 5 6">Catalyzes the conversion of dethiobiotin (DTB) to biotin by the insertion of a sulfur atom into dethiobiotin via a radical-based mechanism.</text>
</comment>
<comment type="catalytic activity">
    <reaction evidence="1 5 6">
        <text>(4R,5S)-dethiobiotin + (sulfur carrier)-SH + 2 reduced [2Fe-2S]-[ferredoxin] + 2 S-adenosyl-L-methionine = (sulfur carrier)-H + biotin + 2 5'-deoxyadenosine + 2 L-methionine + 2 oxidized [2Fe-2S]-[ferredoxin]</text>
        <dbReference type="Rhea" id="RHEA:22060"/>
        <dbReference type="Rhea" id="RHEA-COMP:10000"/>
        <dbReference type="Rhea" id="RHEA-COMP:10001"/>
        <dbReference type="Rhea" id="RHEA-COMP:14737"/>
        <dbReference type="Rhea" id="RHEA-COMP:14739"/>
        <dbReference type="ChEBI" id="CHEBI:17319"/>
        <dbReference type="ChEBI" id="CHEBI:29917"/>
        <dbReference type="ChEBI" id="CHEBI:33737"/>
        <dbReference type="ChEBI" id="CHEBI:33738"/>
        <dbReference type="ChEBI" id="CHEBI:57586"/>
        <dbReference type="ChEBI" id="CHEBI:57844"/>
        <dbReference type="ChEBI" id="CHEBI:59789"/>
        <dbReference type="ChEBI" id="CHEBI:64428"/>
        <dbReference type="ChEBI" id="CHEBI:149473"/>
        <dbReference type="EC" id="2.8.1.6"/>
    </reaction>
</comment>
<comment type="cofactor">
    <cofactor evidence="1">
        <name>[4Fe-4S] cluster</name>
        <dbReference type="ChEBI" id="CHEBI:49883"/>
    </cofactor>
    <text evidence="1">Binds 1 [4Fe-4S] cluster. The cluster is coordinated with 3 cysteines and an exchangeable S-adenosyl-L-methionine.</text>
</comment>
<comment type="cofactor">
    <cofactor evidence="1">
        <name>[2Fe-2S] cluster</name>
        <dbReference type="ChEBI" id="CHEBI:190135"/>
    </cofactor>
    <text evidence="1">Binds 1 [2Fe-2S] cluster. The cluster is coordinated with 3 cysteines and 1 arginine.</text>
</comment>
<comment type="activity regulation">
    <text evidence="5 6">Requires the biotin synthase auxiliary protein BsaP for activity (PubMed:38755122). Inhibited by acidomycin (PubMed:38755122). Competitively inhibited by 5'-deoxyadenosine (dAH), S-(5'-adenosyl)-L-cysteine (AdoCy) and S-(5'-adenosyl)-L-homocysteine (AdoHcy) (PubMed:27156617).</text>
</comment>
<comment type="biophysicochemical properties">
    <kinetics>
        <KM evidence="5">2.81 uM for dethiobiotin</KM>
        <KM evidence="6">7 uM for dethiobiotin</KM>
        <KM evidence="5">9.95 uM for S-adenosyl-L-methionine</KM>
        <text evidence="5 6">kcat is 0.0935 min(-1) (PubMed:27156617). kcat is 0.0064 min(-1) (PubMed:38755122).</text>
    </kinetics>
    <phDependence>
        <text evidence="5">Optimum pH is 8.0.</text>
    </phDependence>
    <temperatureDependence>
        <text evidence="5">Optimum temperature is 37 degrees Celsius (PubMed:27156617). The enzyme is stable up to 40 degrees Celsius and deteriorated at higher temperatures (PubMed:27156617).</text>
    </temperatureDependence>
</comment>
<comment type="pathway">
    <text evidence="1">Cofactor biosynthesis; biotin biosynthesis; biotin from 7,8-diaminononanoate: step 2/2.</text>
</comment>
<comment type="subunit">
    <text evidence="1 5">Homodimer.</text>
</comment>
<comment type="disruption phenotype">
    <text evidence="3 6">The deletion mutant is unable to grow without extrabacterial biotin (PubMed:38755122). Cells lacking this gene are shown to be highly attenuated in a mouse tuberculosis model (PubMed:14569030).</text>
</comment>
<comment type="miscellaneous">
    <text evidence="4">Was identified as a high-confidence drug target.</text>
</comment>
<comment type="similarity">
    <text evidence="1">Belongs to the radical SAM superfamily. Biotin synthase family.</text>
</comment>
<sequence length="349" mass="37550">MTQAATRPTNDAGQDGGNNSDILVVARQQVLQRGEGLNQDQVLAVLQLPDDRLEELLALAHEVRMRWCGPEVEVEGIISLKTGGCPEDCHFCSQSGLFASPVRSAWLDIPSLVEAAKQTAKSGATEFCIVAAVRGPDERLMAQVAAGIEAIRNEVEINIACSLGMLTAEQVDQLAARGVHRYNHNLETARSFFANVVTTHTWEERWQTLSMVRDAGMEVCCGGILGMGETLQQRAEFAAELAELGPDEVPLNFLNPRPGTPFADLEVMPVGDALKAVAAFRLALPRTMLRFAGGREITLGDLGAKRGILGGINAVIVGNYLTTLGRPAEADLELLDELQMPLKALNASL</sequence>
<organism>
    <name type="scientific">Mycobacterium tuberculosis (strain ATCC 25618 / H37Rv)</name>
    <dbReference type="NCBI Taxonomy" id="83332"/>
    <lineage>
        <taxon>Bacteria</taxon>
        <taxon>Bacillati</taxon>
        <taxon>Actinomycetota</taxon>
        <taxon>Actinomycetes</taxon>
        <taxon>Mycobacteriales</taxon>
        <taxon>Mycobacteriaceae</taxon>
        <taxon>Mycobacterium</taxon>
        <taxon>Mycobacterium tuberculosis complex</taxon>
    </lineage>
</organism>
<proteinExistence type="evidence at protein level"/>
<dbReference type="EC" id="2.8.1.6" evidence="1 5 6"/>
<dbReference type="EMBL" id="AL123456">
    <property type="protein sequence ID" value="CCP44353.1"/>
    <property type="molecule type" value="Genomic_DNA"/>
</dbReference>
<dbReference type="PIR" id="G70542">
    <property type="entry name" value="G70542"/>
</dbReference>
<dbReference type="RefSeq" id="NP_216105.1">
    <property type="nucleotide sequence ID" value="NC_000962.3"/>
</dbReference>
<dbReference type="RefSeq" id="WP_003898934.1">
    <property type="nucleotide sequence ID" value="NZ_NVQJ01000016.1"/>
</dbReference>
<dbReference type="SMR" id="P9WPQ7"/>
<dbReference type="FunCoup" id="P9WPQ7">
    <property type="interactions" value="300"/>
</dbReference>
<dbReference type="STRING" id="83332.Rv1589"/>
<dbReference type="iPTMnet" id="P9WPQ7"/>
<dbReference type="PaxDb" id="83332-Rv1589"/>
<dbReference type="DNASU" id="886301"/>
<dbReference type="GeneID" id="886301"/>
<dbReference type="KEGG" id="mtu:Rv1589"/>
<dbReference type="KEGG" id="mtv:RVBD_1589"/>
<dbReference type="TubercuList" id="Rv1589"/>
<dbReference type="eggNOG" id="COG0502">
    <property type="taxonomic scope" value="Bacteria"/>
</dbReference>
<dbReference type="InParanoid" id="P9WPQ7"/>
<dbReference type="OrthoDB" id="9786826at2"/>
<dbReference type="PhylomeDB" id="P9WPQ7"/>
<dbReference type="BRENDA" id="2.8.1.6">
    <property type="organism ID" value="3445"/>
</dbReference>
<dbReference type="UniPathway" id="UPA00078">
    <property type="reaction ID" value="UER00162"/>
</dbReference>
<dbReference type="Proteomes" id="UP000001584">
    <property type="component" value="Chromosome"/>
</dbReference>
<dbReference type="GO" id="GO:0009274">
    <property type="term" value="C:peptidoglycan-based cell wall"/>
    <property type="evidence" value="ECO:0007005"/>
    <property type="project" value="MTBBASE"/>
</dbReference>
<dbReference type="GO" id="GO:0005886">
    <property type="term" value="C:plasma membrane"/>
    <property type="evidence" value="ECO:0007005"/>
    <property type="project" value="MTBBASE"/>
</dbReference>
<dbReference type="GO" id="GO:0051537">
    <property type="term" value="F:2 iron, 2 sulfur cluster binding"/>
    <property type="evidence" value="ECO:0000318"/>
    <property type="project" value="GO_Central"/>
</dbReference>
<dbReference type="GO" id="GO:0051539">
    <property type="term" value="F:4 iron, 4 sulfur cluster binding"/>
    <property type="evidence" value="ECO:0007669"/>
    <property type="project" value="UniProtKB-KW"/>
</dbReference>
<dbReference type="GO" id="GO:0004076">
    <property type="term" value="F:biotin synthase activity"/>
    <property type="evidence" value="ECO:0000318"/>
    <property type="project" value="GO_Central"/>
</dbReference>
<dbReference type="GO" id="GO:0005506">
    <property type="term" value="F:iron ion binding"/>
    <property type="evidence" value="ECO:0007669"/>
    <property type="project" value="UniProtKB-UniRule"/>
</dbReference>
<dbReference type="GO" id="GO:0009102">
    <property type="term" value="P:biotin biosynthetic process"/>
    <property type="evidence" value="ECO:0000318"/>
    <property type="project" value="GO_Central"/>
</dbReference>
<dbReference type="CDD" id="cd01335">
    <property type="entry name" value="Radical_SAM"/>
    <property type="match status" value="1"/>
</dbReference>
<dbReference type="FunFam" id="3.20.20.70:FF:000026">
    <property type="entry name" value="Biotin synthase"/>
    <property type="match status" value="1"/>
</dbReference>
<dbReference type="Gene3D" id="3.20.20.70">
    <property type="entry name" value="Aldolase class I"/>
    <property type="match status" value="1"/>
</dbReference>
<dbReference type="HAMAP" id="MF_01694">
    <property type="entry name" value="BioB"/>
    <property type="match status" value="1"/>
</dbReference>
<dbReference type="InterPro" id="IPR013785">
    <property type="entry name" value="Aldolase_TIM"/>
</dbReference>
<dbReference type="InterPro" id="IPR010722">
    <property type="entry name" value="BATS_dom"/>
</dbReference>
<dbReference type="InterPro" id="IPR002684">
    <property type="entry name" value="Biotin_synth/BioAB"/>
</dbReference>
<dbReference type="InterPro" id="IPR024177">
    <property type="entry name" value="Biotin_synthase"/>
</dbReference>
<dbReference type="InterPro" id="IPR006638">
    <property type="entry name" value="Elp3/MiaA/NifB-like_rSAM"/>
</dbReference>
<dbReference type="InterPro" id="IPR007197">
    <property type="entry name" value="rSAM"/>
</dbReference>
<dbReference type="NCBIfam" id="TIGR00433">
    <property type="entry name" value="bioB"/>
    <property type="match status" value="1"/>
</dbReference>
<dbReference type="PANTHER" id="PTHR22976">
    <property type="entry name" value="BIOTIN SYNTHASE"/>
    <property type="match status" value="1"/>
</dbReference>
<dbReference type="PANTHER" id="PTHR22976:SF2">
    <property type="entry name" value="BIOTIN SYNTHASE, MITOCHONDRIAL"/>
    <property type="match status" value="1"/>
</dbReference>
<dbReference type="Pfam" id="PF06968">
    <property type="entry name" value="BATS"/>
    <property type="match status" value="1"/>
</dbReference>
<dbReference type="Pfam" id="PF04055">
    <property type="entry name" value="Radical_SAM"/>
    <property type="match status" value="1"/>
</dbReference>
<dbReference type="PIRSF" id="PIRSF001619">
    <property type="entry name" value="Biotin_synth"/>
    <property type="match status" value="1"/>
</dbReference>
<dbReference type="SFLD" id="SFLDG01060">
    <property type="entry name" value="BATS_domain_containing"/>
    <property type="match status" value="1"/>
</dbReference>
<dbReference type="SFLD" id="SFLDG01278">
    <property type="entry name" value="biotin_synthase_like"/>
    <property type="match status" value="1"/>
</dbReference>
<dbReference type="SMART" id="SM00876">
    <property type="entry name" value="BATS"/>
    <property type="match status" value="1"/>
</dbReference>
<dbReference type="SMART" id="SM00729">
    <property type="entry name" value="Elp3"/>
    <property type="match status" value="1"/>
</dbReference>
<dbReference type="SUPFAM" id="SSF102114">
    <property type="entry name" value="Radical SAM enzymes"/>
    <property type="match status" value="1"/>
</dbReference>
<dbReference type="PROSITE" id="PS51918">
    <property type="entry name" value="RADICAL_SAM"/>
    <property type="match status" value="1"/>
</dbReference>